<organism>
    <name type="scientific">Merluccius senegalensis</name>
    <name type="common">Senegalese hake</name>
    <dbReference type="NCBI Taxonomy" id="89953"/>
    <lineage>
        <taxon>Eukaryota</taxon>
        <taxon>Metazoa</taxon>
        <taxon>Chordata</taxon>
        <taxon>Craniata</taxon>
        <taxon>Vertebrata</taxon>
        <taxon>Euteleostomi</taxon>
        <taxon>Actinopterygii</taxon>
        <taxon>Neopterygii</taxon>
        <taxon>Teleostei</taxon>
        <taxon>Neoteleostei</taxon>
        <taxon>Acanthomorphata</taxon>
        <taxon>Zeiogadaria</taxon>
        <taxon>Gadariae</taxon>
        <taxon>Gadiformes</taxon>
        <taxon>Gadoidei</taxon>
        <taxon>Merlucciidae</taxon>
        <taxon>Merluccius</taxon>
    </lineage>
</organism>
<evidence type="ECO:0000250" key="1">
    <source>
        <dbReference type="UniProtKB" id="P02621"/>
    </source>
</evidence>
<evidence type="ECO:0000250" key="2">
    <source>
        <dbReference type="UniProtKB" id="P02622"/>
    </source>
</evidence>
<evidence type="ECO:0000250" key="3">
    <source>
        <dbReference type="UniProtKB" id="P02624"/>
    </source>
</evidence>
<evidence type="ECO:0000255" key="4"/>
<evidence type="ECO:0000255" key="5">
    <source>
        <dbReference type="PROSITE-ProRule" id="PRU00448"/>
    </source>
</evidence>
<evidence type="ECO:0000269" key="6">
    <source>
    </source>
</evidence>
<evidence type="ECO:0000303" key="7">
    <source>
    </source>
</evidence>
<evidence type="ECO:0000305" key="8"/>
<feature type="chain" id="PRO_0000399438" description="Parvalbumin beta 2">
    <location>
        <begin position="1"/>
        <end position="108"/>
    </location>
</feature>
<feature type="domain" description="EF-hand 1" evidence="5">
    <location>
        <begin position="38"/>
        <end position="73"/>
    </location>
</feature>
<feature type="domain" description="EF-hand 2" evidence="5">
    <location>
        <begin position="77"/>
        <end position="108"/>
    </location>
</feature>
<feature type="binding site" evidence="1 5">
    <location>
        <position position="51"/>
    </location>
    <ligand>
        <name>Ca(2+)</name>
        <dbReference type="ChEBI" id="CHEBI:29108"/>
        <label>1</label>
    </ligand>
</feature>
<feature type="binding site" evidence="1 5">
    <location>
        <position position="53"/>
    </location>
    <ligand>
        <name>Ca(2+)</name>
        <dbReference type="ChEBI" id="CHEBI:29108"/>
        <label>1</label>
    </ligand>
</feature>
<feature type="binding site" evidence="1 5">
    <location>
        <position position="55"/>
    </location>
    <ligand>
        <name>Ca(2+)</name>
        <dbReference type="ChEBI" id="CHEBI:29108"/>
        <label>1</label>
    </ligand>
</feature>
<feature type="binding site" evidence="1">
    <location>
        <position position="57"/>
    </location>
    <ligand>
        <name>Ca(2+)</name>
        <dbReference type="ChEBI" id="CHEBI:29108"/>
        <label>1</label>
    </ligand>
</feature>
<feature type="binding site" evidence="1">
    <location>
        <position position="59"/>
    </location>
    <ligand>
        <name>Ca(2+)</name>
        <dbReference type="ChEBI" id="CHEBI:29108"/>
        <label>1</label>
    </ligand>
</feature>
<feature type="binding site" evidence="1 5">
    <location>
        <position position="62"/>
    </location>
    <ligand>
        <name>Ca(2+)</name>
        <dbReference type="ChEBI" id="CHEBI:29108"/>
        <label>1</label>
    </ligand>
</feature>
<feature type="binding site" evidence="1 5">
    <location>
        <position position="90"/>
    </location>
    <ligand>
        <name>Ca(2+)</name>
        <dbReference type="ChEBI" id="CHEBI:29108"/>
        <label>2</label>
    </ligand>
</feature>
<feature type="binding site" evidence="1 5">
    <location>
        <position position="92"/>
    </location>
    <ligand>
        <name>Ca(2+)</name>
        <dbReference type="ChEBI" id="CHEBI:29108"/>
        <label>2</label>
    </ligand>
</feature>
<feature type="binding site" evidence="1 5">
    <location>
        <position position="94"/>
    </location>
    <ligand>
        <name>Ca(2+)</name>
        <dbReference type="ChEBI" id="CHEBI:29108"/>
        <label>2</label>
    </ligand>
</feature>
<feature type="binding site" evidence="1">
    <location>
        <position position="96"/>
    </location>
    <ligand>
        <name>Ca(2+)</name>
        <dbReference type="ChEBI" id="CHEBI:29108"/>
        <label>2</label>
    </ligand>
</feature>
<feature type="binding site" evidence="1 5">
    <location>
        <position position="101"/>
    </location>
    <ligand>
        <name>Ca(2+)</name>
        <dbReference type="ChEBI" id="CHEBI:29108"/>
        <label>2</label>
    </ligand>
</feature>
<feature type="modified residue" description="N-acetylalanine" evidence="6">
    <location>
        <position position="1"/>
    </location>
</feature>
<feature type="unsure residue" description="I or L" evidence="6">
    <location>
        <position position="5"/>
    </location>
</feature>
<feature type="unsure residue" description="L or I" evidence="6">
    <location>
        <position position="6"/>
    </location>
</feature>
<feature type="unsure residue" description="I or L" evidence="6">
    <location>
        <position position="11"/>
    </location>
</feature>
<feature type="unsure residue" description="L or I" evidence="6">
    <location>
        <position position="15"/>
    </location>
</feature>
<feature type="unsure residue" description="K or Q" evidence="6">
    <location>
        <position position="16"/>
    </location>
</feature>
<feature type="unsure residue" description="K or Q" evidence="6">
    <location>
        <position position="27"/>
    </location>
</feature>
<feature type="unsure residue" description="K or Q" evidence="6">
    <location>
        <position position="32"/>
    </location>
</feature>
<feature type="unsure residue" description="L or I" evidence="6">
    <location>
        <position position="35"/>
    </location>
</feature>
<feature type="unsure residue" description="K or Q" evidence="6">
    <location>
        <position position="38"/>
    </location>
</feature>
<feature type="unsure residue" description="I or L" evidence="6">
    <location>
        <position position="43"/>
    </location>
</feature>
<feature type="unsure residue" description="K or Q" evidence="6">
    <location>
        <position position="44"/>
    </location>
</feature>
<feature type="unsure residue" description="K or Q" evidence="6">
    <location>
        <position position="45"/>
    </location>
</feature>
<feature type="unsure residue" description="I or L" evidence="6">
    <location>
        <position position="50"/>
    </location>
</feature>
<feature type="unsure residue" description="Q or K" evidence="6">
    <location>
        <position position="52"/>
    </location>
</feature>
<feature type="unsure residue" description="K or Q" evidence="6">
    <location>
        <position position="54"/>
    </location>
</feature>
<feature type="unsure residue" description="I or L" evidence="6">
    <location>
        <position position="58"/>
    </location>
</feature>
<feature type="unsure residue" description="L or I" evidence="6">
    <location>
        <position position="63"/>
    </location>
</feature>
<feature type="unsure residue" description="K or Q" evidence="6">
    <location>
        <position position="64"/>
    </location>
</feature>
<feature type="unsure residue" description="L or I" evidence="6">
    <location>
        <position position="65"/>
    </location>
</feature>
<feature type="unsure residue" description="L or I" evidence="6">
    <location>
        <position position="67"/>
    </location>
</feature>
<feature type="unsure residue" description="Q or K" evidence="6">
    <location>
        <position position="68"/>
    </location>
</feature>
<feature type="unsure residue" description="L or I" evidence="6">
    <location>
        <position position="77"/>
    </location>
</feature>
<feature type="unsure residue" description="K or Q" evidence="6">
    <location>
        <position position="83"/>
    </location>
</feature>
<feature type="unsure residue" description="L or I" evidence="6">
    <location>
        <position position="86"/>
    </location>
</feature>
<feature type="unsure residue" description="K or Q" evidence="6">
    <location>
        <position position="87"/>
    </location>
</feature>
<feature type="unsure residue" description="I or L" evidence="6">
    <location>
        <position position="97"/>
    </location>
</feature>
<feature type="unsure residue" description="L or I" evidence="6">
    <location>
        <position position="105"/>
    </location>
</feature>
<feature type="unsure residue" description="K or Q" evidence="6">
    <location>
        <position position="107"/>
    </location>
</feature>
<comment type="function">
    <text evidence="2 3">In muscle, parvalbumin is thought to be involved in relaxation after contraction. It binds two calcium ions (By similarity).</text>
</comment>
<comment type="mass spectrometry" mass="11379.819" error="0.0349" method="Electrospray" evidence="6"/>
<comment type="miscellaneous">
    <text evidence="2 6">Is regarded as an important allergen.</text>
</comment>
<comment type="miscellaneous">
    <text evidence="6">On the 2D-gel the determined pI of this protein is: 4.20, its MW is: 11.38 kDa.</text>
</comment>
<comment type="similarity">
    <text evidence="4">Belongs to the parvalbumin family.</text>
</comment>
<keyword id="KW-0007">Acetylation</keyword>
<keyword id="KW-0020">Allergen</keyword>
<keyword id="KW-0106">Calcium</keyword>
<keyword id="KW-0903">Direct protein sequencing</keyword>
<keyword id="KW-0479">Metal-binding</keyword>
<keyword id="KW-0514">Muscle protein</keyword>
<keyword id="KW-0677">Repeat</keyword>
<sequence length="108" mass="11345">AFSGILAEADIAAALKACEAAGTFNYKAFFAKVGLTGKSADDIKKAFFVIDQDKSGFIEEDELKLFLQVFSAGARALTDDETKAFLKAGDSDGDGAIGVEEWAALVKA</sequence>
<name>PRVB2_MERSE</name>
<reference evidence="8" key="1">
    <citation type="journal article" date="2010" name="J. Proteome Res.">
        <title>Extensive de novo sequencing of new parvalbumin isoforms using a novel combination of bottom-up proteomics, accurate molecular mass measurement by FTICR-MS, and selected MS/MS ion monitoring.</title>
        <authorList>
            <person name="Carrera M."/>
            <person name="Canas B."/>
            <person name="Vazquez J."/>
            <person name="Gallardo J.M."/>
        </authorList>
    </citation>
    <scope>PROTEIN SEQUENCE</scope>
    <scope>MASS SPECTROMETRY</scope>
    <scope>ACETYLATION AT ALA-1</scope>
    <source>
        <tissue evidence="6">Muscle</tissue>
    </source>
</reference>
<accession>P86779</accession>
<protein>
    <recommendedName>
        <fullName evidence="7">Parvalbumin beta 2</fullName>
    </recommendedName>
</protein>
<dbReference type="SMR" id="P86779"/>
<dbReference type="iPTMnet" id="P86779"/>
<dbReference type="GO" id="GO:0005737">
    <property type="term" value="C:cytoplasm"/>
    <property type="evidence" value="ECO:0007669"/>
    <property type="project" value="TreeGrafter"/>
</dbReference>
<dbReference type="GO" id="GO:0005509">
    <property type="term" value="F:calcium ion binding"/>
    <property type="evidence" value="ECO:0007669"/>
    <property type="project" value="InterPro"/>
</dbReference>
<dbReference type="CDD" id="cd16255">
    <property type="entry name" value="EFh_parvalbumin_beta"/>
    <property type="match status" value="1"/>
</dbReference>
<dbReference type="FunFam" id="1.10.238.10:FF:000060">
    <property type="entry name" value="Parvalbumin, thymic"/>
    <property type="match status" value="1"/>
</dbReference>
<dbReference type="Gene3D" id="1.10.238.10">
    <property type="entry name" value="EF-hand"/>
    <property type="match status" value="1"/>
</dbReference>
<dbReference type="InterPro" id="IPR011992">
    <property type="entry name" value="EF-hand-dom_pair"/>
</dbReference>
<dbReference type="InterPro" id="IPR018247">
    <property type="entry name" value="EF_Hand_1_Ca_BS"/>
</dbReference>
<dbReference type="InterPro" id="IPR002048">
    <property type="entry name" value="EF_hand_dom"/>
</dbReference>
<dbReference type="InterPro" id="IPR008080">
    <property type="entry name" value="Parvalbumin"/>
</dbReference>
<dbReference type="PANTHER" id="PTHR11653:SF12">
    <property type="entry name" value="PARVALBUMIN"/>
    <property type="match status" value="1"/>
</dbReference>
<dbReference type="PANTHER" id="PTHR11653">
    <property type="entry name" value="PARVALBUMIN ALPHA"/>
    <property type="match status" value="1"/>
</dbReference>
<dbReference type="Pfam" id="PF13499">
    <property type="entry name" value="EF-hand_7"/>
    <property type="match status" value="1"/>
</dbReference>
<dbReference type="PRINTS" id="PR01697">
    <property type="entry name" value="PARVALBUMIN"/>
</dbReference>
<dbReference type="SMART" id="SM00054">
    <property type="entry name" value="EFh"/>
    <property type="match status" value="2"/>
</dbReference>
<dbReference type="SUPFAM" id="SSF47473">
    <property type="entry name" value="EF-hand"/>
    <property type="match status" value="1"/>
</dbReference>
<dbReference type="PROSITE" id="PS00018">
    <property type="entry name" value="EF_HAND_1"/>
    <property type="match status" value="2"/>
</dbReference>
<dbReference type="PROSITE" id="PS50222">
    <property type="entry name" value="EF_HAND_2"/>
    <property type="match status" value="2"/>
</dbReference>
<proteinExistence type="evidence at protein level"/>